<keyword id="KW-0002">3D-structure</keyword>
<keyword id="KW-0025">Alternative splicing</keyword>
<keyword id="KW-0072">Autophagy</keyword>
<keyword id="KW-1003">Cell membrane</keyword>
<keyword id="KW-0963">Cytoplasm</keyword>
<keyword id="KW-0968">Cytoplasmic vesicle</keyword>
<keyword id="KW-0256">Endoplasmic reticulum</keyword>
<keyword id="KW-0333">Golgi apparatus</keyword>
<keyword id="KW-0391">Immunity</keyword>
<keyword id="KW-0399">Innate immunity</keyword>
<keyword id="KW-0407">Ion channel</keyword>
<keyword id="KW-0406">Ion transport</keyword>
<keyword id="KW-1017">Isopeptide bond</keyword>
<keyword id="KW-0449">Lipoprotein</keyword>
<keyword id="KW-0458">Lysosome</keyword>
<keyword id="KW-0472">Membrane</keyword>
<keyword id="KW-0496">Mitochondrion</keyword>
<keyword id="KW-1000">Mitochondrion outer membrane</keyword>
<keyword id="KW-0547">Nucleotide-binding</keyword>
<keyword id="KW-0564">Palmitate</keyword>
<keyword id="KW-0597">Phosphoprotein</keyword>
<keyword id="KW-1185">Reference proteome</keyword>
<keyword id="KW-0812">Transmembrane</keyword>
<keyword id="KW-1133">Transmembrane helix</keyword>
<keyword id="KW-0813">Transport</keyword>
<keyword id="KW-0832">Ubl conjugation</keyword>
<accession>Q3TBT3</accession>
<accession>A7YGY9</accession>
<accession>Q3TAV5</accession>
<accession>Q3TYP5</accession>
<accession>Q3TZY8</accession>
<accession>Q3UJW3</accession>
<accession>Q8C227</accession>
<accession>Q8C5Q3</accession>
<accession>Q8K393</accession>
<accession>Q9CZY7</accession>
<reference key="1">
    <citation type="journal article" date="2008" name="Immunity">
        <title>The adaptor protein MITA links virus-sensing receptors to IRF3 transcription factor activation.</title>
        <authorList>
            <person name="Zhong B."/>
            <person name="Yang Y."/>
            <person name="Li S."/>
            <person name="Wang Y.-Y."/>
            <person name="Li Y."/>
            <person name="Diao F."/>
            <person name="Lei C."/>
            <person name="He X."/>
            <person name="Zhang L."/>
            <person name="Tien P."/>
            <person name="Shu H.-B."/>
        </authorList>
    </citation>
    <scope>NUCLEOTIDE SEQUENCE [MRNA]</scope>
    <scope>FUNCTION</scope>
</reference>
<reference key="2">
    <citation type="journal article" date="2008" name="Mol. Cell. Biol.">
        <title>MPYS, a novel membrane tetraspanner, is associated with major histocompatibility complex class II and mediates transduction of apoptotic signals.</title>
        <authorList>
            <person name="Jin L."/>
            <person name="Waterman P.M."/>
            <person name="Jonscher K.R."/>
            <person name="Short C.M."/>
            <person name="Reisdorph N.A."/>
            <person name="Cambier J.C."/>
        </authorList>
    </citation>
    <scope>NUCLEOTIDE SEQUENCE [MRNA]</scope>
    <scope>FUNCTION</scope>
    <scope>SUBCELLULAR LOCATION</scope>
    <scope>TOPOLOGY</scope>
    <scope>SUBUNIT</scope>
    <scope>TISSUE SPECIFICITY</scope>
    <scope>DEVELOPMENTAL STAGE</scope>
    <scope>PHOSPHORYLATION</scope>
</reference>
<reference key="3">
    <citation type="journal article" date="2005" name="Science">
        <title>The transcriptional landscape of the mammalian genome.</title>
        <authorList>
            <person name="Carninci P."/>
            <person name="Kasukawa T."/>
            <person name="Katayama S."/>
            <person name="Gough J."/>
            <person name="Frith M.C."/>
            <person name="Maeda N."/>
            <person name="Oyama R."/>
            <person name="Ravasi T."/>
            <person name="Lenhard B."/>
            <person name="Wells C."/>
            <person name="Kodzius R."/>
            <person name="Shimokawa K."/>
            <person name="Bajic V.B."/>
            <person name="Brenner S.E."/>
            <person name="Batalov S."/>
            <person name="Forrest A.R."/>
            <person name="Zavolan M."/>
            <person name="Davis M.J."/>
            <person name="Wilming L.G."/>
            <person name="Aidinis V."/>
            <person name="Allen J.E."/>
            <person name="Ambesi-Impiombato A."/>
            <person name="Apweiler R."/>
            <person name="Aturaliya R.N."/>
            <person name="Bailey T.L."/>
            <person name="Bansal M."/>
            <person name="Baxter L."/>
            <person name="Beisel K.W."/>
            <person name="Bersano T."/>
            <person name="Bono H."/>
            <person name="Chalk A.M."/>
            <person name="Chiu K.P."/>
            <person name="Choudhary V."/>
            <person name="Christoffels A."/>
            <person name="Clutterbuck D.R."/>
            <person name="Crowe M.L."/>
            <person name="Dalla E."/>
            <person name="Dalrymple B.P."/>
            <person name="de Bono B."/>
            <person name="Della Gatta G."/>
            <person name="di Bernardo D."/>
            <person name="Down T."/>
            <person name="Engstrom P."/>
            <person name="Fagiolini M."/>
            <person name="Faulkner G."/>
            <person name="Fletcher C.F."/>
            <person name="Fukushima T."/>
            <person name="Furuno M."/>
            <person name="Futaki S."/>
            <person name="Gariboldi M."/>
            <person name="Georgii-Hemming P."/>
            <person name="Gingeras T.R."/>
            <person name="Gojobori T."/>
            <person name="Green R.E."/>
            <person name="Gustincich S."/>
            <person name="Harbers M."/>
            <person name="Hayashi Y."/>
            <person name="Hensch T.K."/>
            <person name="Hirokawa N."/>
            <person name="Hill D."/>
            <person name="Huminiecki L."/>
            <person name="Iacono M."/>
            <person name="Ikeo K."/>
            <person name="Iwama A."/>
            <person name="Ishikawa T."/>
            <person name="Jakt M."/>
            <person name="Kanapin A."/>
            <person name="Katoh M."/>
            <person name="Kawasawa Y."/>
            <person name="Kelso J."/>
            <person name="Kitamura H."/>
            <person name="Kitano H."/>
            <person name="Kollias G."/>
            <person name="Krishnan S.P."/>
            <person name="Kruger A."/>
            <person name="Kummerfeld S.K."/>
            <person name="Kurochkin I.V."/>
            <person name="Lareau L.F."/>
            <person name="Lazarevic D."/>
            <person name="Lipovich L."/>
            <person name="Liu J."/>
            <person name="Liuni S."/>
            <person name="McWilliam S."/>
            <person name="Madan Babu M."/>
            <person name="Madera M."/>
            <person name="Marchionni L."/>
            <person name="Matsuda H."/>
            <person name="Matsuzawa S."/>
            <person name="Miki H."/>
            <person name="Mignone F."/>
            <person name="Miyake S."/>
            <person name="Morris K."/>
            <person name="Mottagui-Tabar S."/>
            <person name="Mulder N."/>
            <person name="Nakano N."/>
            <person name="Nakauchi H."/>
            <person name="Ng P."/>
            <person name="Nilsson R."/>
            <person name="Nishiguchi S."/>
            <person name="Nishikawa S."/>
            <person name="Nori F."/>
            <person name="Ohara O."/>
            <person name="Okazaki Y."/>
            <person name="Orlando V."/>
            <person name="Pang K.C."/>
            <person name="Pavan W.J."/>
            <person name="Pavesi G."/>
            <person name="Pesole G."/>
            <person name="Petrovsky N."/>
            <person name="Piazza S."/>
            <person name="Reed J."/>
            <person name="Reid J.F."/>
            <person name="Ring B.Z."/>
            <person name="Ringwald M."/>
            <person name="Rost B."/>
            <person name="Ruan Y."/>
            <person name="Salzberg S.L."/>
            <person name="Sandelin A."/>
            <person name="Schneider C."/>
            <person name="Schoenbach C."/>
            <person name="Sekiguchi K."/>
            <person name="Semple C.A."/>
            <person name="Seno S."/>
            <person name="Sessa L."/>
            <person name="Sheng Y."/>
            <person name="Shibata Y."/>
            <person name="Shimada H."/>
            <person name="Shimada K."/>
            <person name="Silva D."/>
            <person name="Sinclair B."/>
            <person name="Sperling S."/>
            <person name="Stupka E."/>
            <person name="Sugiura K."/>
            <person name="Sultana R."/>
            <person name="Takenaka Y."/>
            <person name="Taki K."/>
            <person name="Tammoja K."/>
            <person name="Tan S.L."/>
            <person name="Tang S."/>
            <person name="Taylor M.S."/>
            <person name="Tegner J."/>
            <person name="Teichmann S.A."/>
            <person name="Ueda H.R."/>
            <person name="van Nimwegen E."/>
            <person name="Verardo R."/>
            <person name="Wei C.L."/>
            <person name="Yagi K."/>
            <person name="Yamanishi H."/>
            <person name="Zabarovsky E."/>
            <person name="Zhu S."/>
            <person name="Zimmer A."/>
            <person name="Hide W."/>
            <person name="Bult C."/>
            <person name="Grimmond S.M."/>
            <person name="Teasdale R.D."/>
            <person name="Liu E.T."/>
            <person name="Brusic V."/>
            <person name="Quackenbush J."/>
            <person name="Wahlestedt C."/>
            <person name="Mattick J.S."/>
            <person name="Hume D.A."/>
            <person name="Kai C."/>
            <person name="Sasaki D."/>
            <person name="Tomaru Y."/>
            <person name="Fukuda S."/>
            <person name="Kanamori-Katayama M."/>
            <person name="Suzuki M."/>
            <person name="Aoki J."/>
            <person name="Arakawa T."/>
            <person name="Iida J."/>
            <person name="Imamura K."/>
            <person name="Itoh M."/>
            <person name="Kato T."/>
            <person name="Kawaji H."/>
            <person name="Kawagashira N."/>
            <person name="Kawashima T."/>
            <person name="Kojima M."/>
            <person name="Kondo S."/>
            <person name="Konno H."/>
            <person name="Nakano K."/>
            <person name="Ninomiya N."/>
            <person name="Nishio T."/>
            <person name="Okada M."/>
            <person name="Plessy C."/>
            <person name="Shibata K."/>
            <person name="Shiraki T."/>
            <person name="Suzuki S."/>
            <person name="Tagami M."/>
            <person name="Waki K."/>
            <person name="Watahiki A."/>
            <person name="Okamura-Oho Y."/>
            <person name="Suzuki H."/>
            <person name="Kawai J."/>
            <person name="Hayashizaki Y."/>
        </authorList>
    </citation>
    <scope>NUCLEOTIDE SEQUENCE [LARGE SCALE MRNA] (ISOFORMS 1; 2 AND 3)</scope>
    <source>
        <strain>C57BL/6J</strain>
        <tissue>Embryo</tissue>
        <tissue>Inner ear</tissue>
        <tissue>Spleen</tissue>
        <tissue>Thymus</tissue>
    </source>
</reference>
<reference key="4">
    <citation type="submission" date="2005-07" db="EMBL/GenBank/DDBJ databases">
        <authorList>
            <person name="Mural R.J."/>
            <person name="Adams M.D."/>
            <person name="Myers E.W."/>
            <person name="Smith H.O."/>
            <person name="Venter J.C."/>
        </authorList>
    </citation>
    <scope>NUCLEOTIDE SEQUENCE [LARGE SCALE GENOMIC DNA]</scope>
</reference>
<reference key="5">
    <citation type="journal article" date="2004" name="Genome Res.">
        <title>The status, quality, and expansion of the NIH full-length cDNA project: the Mammalian Gene Collection (MGC).</title>
        <authorList>
            <consortium name="The MGC Project Team"/>
        </authorList>
    </citation>
    <scope>NUCLEOTIDE SEQUENCE [LARGE SCALE MRNA] (ISOFORM 1)</scope>
    <source>
        <strain>Czech II</strain>
        <strain>FVB/N</strain>
        <tissue>Mammary gland</tissue>
    </source>
</reference>
<reference key="6">
    <citation type="journal article" date="2008" name="Nature">
        <title>STING is an endoplasmic reticulum adaptor that facilitates innate immune signalling.</title>
        <authorList>
            <person name="Ishikawa H."/>
            <person name="Barber G.N."/>
        </authorList>
    </citation>
    <scope>FUNCTION</scope>
</reference>
<reference key="7">
    <citation type="journal article" date="2009" name="Nature">
        <title>STING regulates intracellular DNA-mediated, type I interferon-dependent innate immunity.</title>
        <authorList>
            <person name="Ishikawa H."/>
            <person name="Ma Z."/>
            <person name="Barber G.N."/>
        </authorList>
    </citation>
    <scope>FUNCTION</scope>
    <scope>SUBCELLULAR LOCATION</scope>
    <scope>DISRUPTION PHENOTYPE</scope>
</reference>
<reference key="8">
    <citation type="journal article" date="2009" name="Proc. Natl. Acad. Sci. U.S.A.">
        <title>ERIS, an endoplasmic reticulum IFN stimulator, activates innate immune signaling through dimerization.</title>
        <authorList>
            <person name="Sun W."/>
            <person name="Li Y."/>
            <person name="Chen L."/>
            <person name="Chen H."/>
            <person name="You F."/>
            <person name="Zhou X."/>
            <person name="Zhou Y."/>
            <person name="Zhai Z."/>
            <person name="Chen D."/>
            <person name="Jiang Z."/>
        </authorList>
    </citation>
    <scope>FUNCTION</scope>
</reference>
<reference key="9">
    <citation type="journal article" date="2010" name="Cell">
        <title>A tissue-specific atlas of mouse protein phosphorylation and expression.</title>
        <authorList>
            <person name="Huttlin E.L."/>
            <person name="Jedrychowski M.P."/>
            <person name="Elias J.E."/>
            <person name="Goswami T."/>
            <person name="Rad R."/>
            <person name="Beausoleil S.A."/>
            <person name="Villen J."/>
            <person name="Haas W."/>
            <person name="Sowa M.E."/>
            <person name="Gygi S.P."/>
        </authorList>
    </citation>
    <scope>IDENTIFICATION BY MASS SPECTROMETRY [LARGE SCALE ANALYSIS]</scope>
    <source>
        <tissue>Lung</tissue>
        <tissue>Spleen</tissue>
    </source>
</reference>
<reference key="10">
    <citation type="journal article" date="2011" name="Nature">
        <title>STING is a direct innate immune sensor of cyclic di-GMP.</title>
        <authorList>
            <person name="Burdette D.L."/>
            <person name="Monroe K.M."/>
            <person name="Sotelo-Troha K."/>
            <person name="Iwig J.S."/>
            <person name="Eckert B."/>
            <person name="Hyodo M."/>
            <person name="Hayakawa Y."/>
            <person name="Vance R.E."/>
        </authorList>
    </citation>
    <scope>FUNCTION</scope>
    <scope>C-DI-GMP-BINDING</scope>
</reference>
<reference key="11">
    <citation type="journal article" date="2011" name="Nat. Immunol.">
        <title>The helicase DDX41 senses intracellular DNA mediated by the adaptor STING in dendritic cells.</title>
        <authorList>
            <person name="Zhang Z."/>
            <person name="Yuan B."/>
            <person name="Bao M."/>
            <person name="Lu N."/>
            <person name="Kim T."/>
            <person name="Liu Y.J."/>
        </authorList>
    </citation>
    <scope>FUNCTION</scope>
    <scope>INTERACTION WITH DDX41</scope>
    <scope>SUBCELLULAR LOCATION</scope>
</reference>
<reference key="12">
    <citation type="journal article" date="2013" name="Nature">
        <title>cGAS produces a 2'-5'-linked cyclic dinucleotide second messenger that activates STING.</title>
        <authorList>
            <person name="Ablasser A."/>
            <person name="Goldeck M."/>
            <person name="Cavlar T."/>
            <person name="Deimling T."/>
            <person name="Witte G."/>
            <person name="Rohl I."/>
            <person name="Hopfner K.P."/>
            <person name="Ludwig J."/>
            <person name="Hornung V."/>
        </authorList>
    </citation>
    <scope>FUNCTION</scope>
</reference>
<reference key="13">
    <citation type="journal article" date="2013" name="Science">
        <title>Cyclic GMP-AMP is an endogenous second messenger in innate immune signaling by cytosolic DNA.</title>
        <authorList>
            <person name="Wu J."/>
            <person name="Sun L."/>
            <person name="Chen X."/>
            <person name="Du F."/>
            <person name="Shi H."/>
            <person name="Chen C."/>
            <person name="Chen Z.J."/>
        </authorList>
    </citation>
    <scope>FUNCTION</scope>
    <scope>CGAMP-BINDING</scope>
    <scope>MUTAGENESIS OF SER-161; TYR-239 AND ASN-241</scope>
</reference>
<reference key="14">
    <citation type="journal article" date="2015" name="Mol. Cell">
        <title>Ancient origin of cGAS-STING reveals mechanism of universal 2',3' cGAMP signaling.</title>
        <authorList>
            <person name="Kranzusch P.J."/>
            <person name="Wilson S.C."/>
            <person name="Lee A.S."/>
            <person name="Berger J.M."/>
            <person name="Doudna J.A."/>
            <person name="Vance R.E."/>
        </authorList>
    </citation>
    <scope>FUNCTION</scope>
</reference>
<reference key="15">
    <citation type="journal article" date="2015" name="Sci. Rep.">
        <title>Rat and human STINGs profile similarly towards anticancer/antiviral compounds.</title>
        <authorList>
            <person name="Zhang H."/>
            <person name="Han M.J."/>
            <person name="Tao J."/>
            <person name="Ye Z.Y."/>
            <person name="Du X.X."/>
            <person name="Deng M.J."/>
            <person name="Zhang X.Y."/>
            <person name="Li L.F."/>
            <person name="Jiang Z.F."/>
            <person name="Su X.D."/>
        </authorList>
    </citation>
    <scope>FUNCTION</scope>
    <scope>ACTIVITY REGULATION</scope>
    <scope>MUTAGENESIS OF ILE-229</scope>
</reference>
<reference key="16">
    <citation type="journal article" date="2015" name="Science">
        <title>Phosphorylation of innate immune adaptor proteins MAVS, STING, and TRIF induces IRF3 activation.</title>
        <authorList>
            <person name="Liu S."/>
            <person name="Cai X."/>
            <person name="Wu J."/>
            <person name="Cong Q."/>
            <person name="Chen X."/>
            <person name="Li T."/>
            <person name="Du F."/>
            <person name="Ren J."/>
            <person name="Wu Y.T."/>
            <person name="Grishin N.V."/>
            <person name="Chen Z.J."/>
        </authorList>
    </citation>
    <scope>FUNCTION</scope>
    <scope>DOMAIN</scope>
    <scope>INTERACTION WITH IRF3</scope>
    <scope>PHOSPHORYLATION AT SER-357 AND SER-365</scope>
    <scope>MUTAGENESIS OF SER-357 AND SER-365</scope>
</reference>
<reference key="17">
    <citation type="journal article" date="2015" name="Science">
        <title>Viruses transfer the antiviral second messenger cGAMP between cells.</title>
        <authorList>
            <person name="Bridgeman A."/>
            <person name="Maelfait J."/>
            <person name="Davenne T."/>
            <person name="Partridge T."/>
            <person name="Peng Y."/>
            <person name="Mayer A."/>
            <person name="Dong T."/>
            <person name="Kaever V."/>
            <person name="Borrow P."/>
            <person name="Rehwinkel J."/>
        </authorList>
    </citation>
    <scope>FUNCTION</scope>
</reference>
<reference key="18">
    <citation type="journal article" date="2016" name="Immunity">
        <title>Sumoylation promotes the stability of the DNA sensor cGAS and the adaptor STING to regulate the kinetics of response to DNA virus.</title>
        <authorList>
            <person name="Hu M.M."/>
            <person name="Yang Q."/>
            <person name="Xie X.Q."/>
            <person name="Liao C.Y."/>
            <person name="Lin H."/>
            <person name="Liu T.T."/>
            <person name="Yin L."/>
            <person name="Shu H.B."/>
        </authorList>
    </citation>
    <scope>SUMOYLATION AT LYS-337</scope>
    <scope>PHOSPHORYLATION AT SER-365</scope>
    <scope>SUBCELLULAR LOCATION</scope>
    <scope>DESUMOYLATION</scope>
    <scope>MUTAGENESIS OF 326-GLN-GLU-327 AND LYS-337</scope>
</reference>
<reference key="19">
    <citation type="journal article" date="2016" name="Nat. Commun.">
        <title>Activation of STING requires palmitoylation at the Golgi.</title>
        <authorList>
            <person name="Mukai K."/>
            <person name="Konno H."/>
            <person name="Akiba T."/>
            <person name="Uemura T."/>
            <person name="Waguri S."/>
            <person name="Kobayashi T."/>
            <person name="Barber G.N."/>
            <person name="Arai H."/>
            <person name="Taguchi T."/>
        </authorList>
    </citation>
    <scope>PALMITOYLATION AT CYS-88 AND CYS-91</scope>
    <scope>FUNCTION</scope>
    <scope>SUBCELLULAR LOCATION</scope>
    <scope>MUTAGENESIS OF 64-CYS-CYS-65; 88-CYS--CYS-91; CYS-147; CYS-205; CYS-256; CYS-291 AND CYS-308</scope>
</reference>
<reference key="20">
    <citation type="journal article" date="2017" name="Cell">
        <title>STING senses microbial viability to orchestrate stress-mediated autophagy of the endoplasmic reticulum.</title>
        <authorList>
            <person name="Moretti J."/>
            <person name="Roy S."/>
            <person name="Bozec D."/>
            <person name="Martinez J."/>
            <person name="Chapman J.R."/>
            <person name="Ueberheide B."/>
            <person name="Lamming D.W."/>
            <person name="Chen Z.J."/>
            <person name="Horng T."/>
            <person name="Yeretssian G."/>
            <person name="Green D.R."/>
            <person name="Blander J.M."/>
        </authorList>
    </citation>
    <scope>FUNCTION</scope>
    <scope>SUBCELLULAR LOCATION</scope>
</reference>
<reference key="21">
    <citation type="journal article" date="2017" name="Cell Rep.">
        <title>The RAB2B-GARIL5 Complex Promotes Cytosolic DNA-Induced Innate Immune Responses.</title>
        <authorList>
            <person name="Takahama M."/>
            <person name="Fukuda M."/>
            <person name="Ohbayashi N."/>
            <person name="Kozaki T."/>
            <person name="Misawa T."/>
            <person name="Okamoto T."/>
            <person name="Matsuura Y."/>
            <person name="Akira S."/>
            <person name="Saitoh T."/>
        </authorList>
    </citation>
    <scope>SUBCELLULAR LOCATION</scope>
</reference>
<reference key="22">
    <citation type="journal article" date="2017" name="Front. Cell. Infect. Microbiol.">
        <title>The Central Role of IFI204 in IFN-beta Release and Autophagy Activation during Mycobacterium bovis Infection.</title>
        <authorList>
            <person name="Chunfa L."/>
            <person name="Xin S."/>
            <person name="Qiang L."/>
            <person name="Sreevatsan S."/>
            <person name="Yang L."/>
            <person name="Zhao D."/>
            <person name="Zhou X."/>
        </authorList>
    </citation>
    <scope>FUNCTION</scope>
    <scope>INTERACTION WITH IFI204</scope>
</reference>
<reference key="23">
    <citation type="journal article" date="2018" name="Nature">
        <title>Targeting STING with covalent small-molecule inhibitors.</title>
        <authorList>
            <person name="Haag S.M."/>
            <person name="Gulen M.F."/>
            <person name="Reymond L."/>
            <person name="Gibelin A."/>
            <person name="Abrami L."/>
            <person name="Decout A."/>
            <person name="Heymann M."/>
            <person name="van der Goot F.G."/>
            <person name="Turcatti G."/>
            <person name="Behrendt R."/>
            <person name="Ablasser A."/>
        </authorList>
    </citation>
    <scope>FUNCTION</scope>
    <scope>ACTIVITY REGULATION</scope>
    <scope>PALMITOYLATION</scope>
    <scope>MUTAGENESIS OF CYS-91</scope>
</reference>
<reference key="24">
    <citation type="journal article" date="2019" name="Cell Death Differ.">
        <title>STING directly activates autophagy to tune the innate immune response.</title>
        <authorList>
            <person name="Liu D."/>
            <person name="Wu H."/>
            <person name="Wang C."/>
            <person name="Li Y."/>
            <person name="Tian H."/>
            <person name="Siraj S."/>
            <person name="Sehgal S.A."/>
            <person name="Wang X."/>
            <person name="Wang J."/>
            <person name="Shang Y."/>
            <person name="Jiang Z."/>
            <person name="Liu L."/>
            <person name="Chen Q."/>
        </authorList>
    </citation>
    <scope>FUNCTION</scope>
</reference>
<reference key="25">
    <citation type="journal article" date="2018" name="EMBO J.">
        <title>Attenuation of cGAS-STING signaling is mediated by a p62/SQSTM1-dependent autophagy pathway activated by TBK1.</title>
        <authorList>
            <person name="Prabakaran T."/>
            <person name="Bodda C."/>
            <person name="Krapp C."/>
            <person name="Zhang B.C."/>
            <person name="Christensen M.H."/>
            <person name="Sun C."/>
            <person name="Reinert L."/>
            <person name="Cai Y."/>
            <person name="Jensen S.B."/>
            <person name="Skouboe M.K."/>
            <person name="Nyengaard J.R."/>
            <person name="Thompson C.B."/>
            <person name="Lebbink R.J."/>
            <person name="Sen G.C."/>
            <person name="van Loo G."/>
            <person name="Nielsen R."/>
            <person name="Komatsu M."/>
            <person name="Nejsum L.N."/>
            <person name="Jakobsen M.R."/>
            <person name="Gyrd-Hansen M."/>
            <person name="Paludan S.R."/>
        </authorList>
    </citation>
    <scope>SUBCELLULAR LOCATION</scope>
    <scope>UBIQUITINATION</scope>
    <scope>INTERACTION WITH SQSTM1</scope>
</reference>
<reference key="26">
    <citation type="journal article" date="2019" name="Proc. Natl. Acad. Sci. U.S.A.">
        <title>TMEM203 is a binding partner and regulator of STING-mediated inflammatory signaling in macrophages.</title>
        <authorList>
            <person name="Li Y."/>
            <person name="James S.J."/>
            <person name="Wyllie D.H."/>
            <person name="Wynne C."/>
            <person name="Czibula A."/>
            <person name="Bukhari A."/>
            <person name="Pye K."/>
            <person name="Bte Mustafah S.M."/>
            <person name="Fajka-Boja R."/>
            <person name="Szabo E."/>
            <person name="Angyal A."/>
            <person name="Hegedus Z."/>
            <person name="Kovacs L."/>
            <person name="Hill A.V.S."/>
            <person name="Jefferies C.A."/>
            <person name="Wilson H.L."/>
            <person name="Yongliang Z."/>
            <person name="Kiss-Toth E."/>
        </authorList>
    </citation>
    <scope>FUNCTION</scope>
    <scope>INTERACTION WITH TMEM203</scope>
    <scope>SUBCELLULAR LOCATION</scope>
</reference>
<reference key="27">
    <citation type="journal article" date="2019" name="Science">
        <title>Nuclear hnRNPA2B1 initiates and amplifies the innate immune response to DNA viruses.</title>
        <authorList>
            <person name="Wang L."/>
            <person name="Wen M."/>
            <person name="Cao X."/>
        </authorList>
    </citation>
    <scope>INTERACTION WITH HNRNPA2B1</scope>
</reference>
<reference key="28">
    <citation type="journal article" date="2023" name="Mol. Cell">
        <title>TAK1 is an essential kinase for STING trafficking.</title>
        <authorList>
            <person name="Ma M."/>
            <person name="Dang Y."/>
            <person name="Chang B."/>
            <person name="Wang F."/>
            <person name="Xu J."/>
            <person name="Chen L."/>
            <person name="Su H."/>
            <person name="Li J."/>
            <person name="Ge B."/>
            <person name="Chen C."/>
            <person name="Liu H."/>
        </authorList>
    </citation>
    <scope>INTERACTION WITH TAB1</scope>
    <scope>SUBCELLULAR LOCATION</scope>
    <scope>PHOSPHORYLATION AT SER-354</scope>
</reference>
<reference key="29">
    <citation type="journal article" date="2023" name="EMBO Rep.">
        <title>MARCH5 promotes STING pathway activation by suppressing polymer formation of oxidized STING.</title>
        <authorList>
            <person name="Son K."/>
            <person name="Jeong S."/>
            <person name="Eom E."/>
            <person name="Kwon D."/>
            <person name="Kang S.J."/>
        </authorList>
    </citation>
    <scope>UBIQUITINATION BY MARCHF5</scope>
    <scope>MUTAGENESIS OF LYS-19</scope>
</reference>
<reference evidence="40 41" key="30">
    <citation type="journal article" date="2013" name="Acta Crystallogr. D">
        <title>Novel c-di-GMP recognition modes of the mouse innate immune adaptor protein STING.</title>
        <authorList>
            <person name="Chin K.H."/>
            <person name="Tu Z.L."/>
            <person name="Su Y.C."/>
            <person name="Yu Y.J."/>
            <person name="Chen H.C."/>
            <person name="Lo Y.C."/>
            <person name="Chen C.P."/>
            <person name="Barber G.N."/>
            <person name="Chuah M.L."/>
            <person name="Liang Z.X."/>
            <person name="Chou S.H."/>
        </authorList>
    </citation>
    <scope>X-RAY CRYSTALLOGRAPHY (2.4 ANGSTROMS) OF 138-344 IN COMPLEX WITH CYCLIC DIGUANOSINE MONOPHOSPHATE</scope>
    <scope>FUNCTION</scope>
    <scope>SUBUNIT</scope>
</reference>
<reference evidence="42 43 44" key="31">
    <citation type="journal article" date="2013" name="Cell">
        <title>Structure-function analysis of STING activation by c[G(2',5')pA(3',5')p] and targeting by antiviral DMXAA.</title>
        <authorList>
            <person name="Gao P."/>
            <person name="Ascano M."/>
            <person name="Zillinger T."/>
            <person name="Wang W."/>
            <person name="Dai P."/>
            <person name="Serganov A.A."/>
            <person name="Gaffney B.L."/>
            <person name="Shuman S."/>
            <person name="Jones R.A."/>
            <person name="Deng L."/>
            <person name="Hartmann G."/>
            <person name="Barchet W."/>
            <person name="Tuschl T."/>
            <person name="Patel D.J."/>
        </authorList>
    </citation>
    <scope>X-RAY CRYSTALLOGRAPHY (1.77 ANGSTROMS) OF 154-340 IN COMPLEX WITH 2'3'-CGAMP; 3'3'-CGAMP AND DMXAA</scope>
    <scope>FUNCTION</scope>
    <scope>ACTIVITY REGULATION</scope>
</reference>
<feature type="chain" id="PRO_0000271117" description="Stimulator of interferon genes protein">
    <location>
        <begin position="1"/>
        <end position="378"/>
    </location>
</feature>
<feature type="topological domain" description="Cytoplasmic" evidence="2">
    <location>
        <begin position="1"/>
        <end position="17"/>
    </location>
</feature>
<feature type="transmembrane region" description="Helical; Name=1" evidence="2">
    <location>
        <begin position="18"/>
        <end position="34"/>
    </location>
</feature>
<feature type="topological domain" description="Lumenal" evidence="2">
    <location>
        <begin position="35"/>
        <end position="44"/>
    </location>
</feature>
<feature type="transmembrane region" description="Helical; Name=2" evidence="2">
    <location>
        <begin position="45"/>
        <end position="69"/>
    </location>
</feature>
<feature type="topological domain" description="Cytoplasmic" evidence="2">
    <location>
        <begin position="70"/>
        <end position="91"/>
    </location>
</feature>
<feature type="transmembrane region" description="Helical; Name=3" evidence="2">
    <location>
        <begin position="92"/>
        <end position="106"/>
    </location>
</feature>
<feature type="topological domain" description="Lumenal" evidence="2">
    <location>
        <begin position="107"/>
        <end position="115"/>
    </location>
</feature>
<feature type="transmembrane region" description="Helical; Name=4" evidence="2">
    <location>
        <begin position="116"/>
        <end position="133"/>
    </location>
</feature>
<feature type="topological domain" description="Cytoplasmic" evidence="2">
    <location>
        <begin position="134"/>
        <end position="378"/>
    </location>
</feature>
<feature type="region of interest" description="Mediates interaction with ZDHHC1 and ZDHHC11" evidence="2">
    <location>
        <begin position="1"/>
        <end position="189"/>
    </location>
</feature>
<feature type="region of interest" description="Cyclic dinucleotide-binding domain (CBD)" evidence="10">
    <location>
        <begin position="152"/>
        <end position="339"/>
    </location>
</feature>
<feature type="region of interest" description="C-terminal tail (CTT)" evidence="2">
    <location>
        <begin position="339"/>
        <end position="378"/>
    </location>
</feature>
<feature type="short sequence motif" description="pLxIS motif" evidence="2">
    <location>
        <begin position="362"/>
        <end position="365"/>
    </location>
</feature>
<feature type="binding site" evidence="10 40">
    <location>
        <position position="165"/>
    </location>
    <ligand>
        <name>3',3'-c-di-GMP</name>
        <dbReference type="ChEBI" id="CHEBI:58805"/>
    </ligand>
</feature>
<feature type="binding site" evidence="2">
    <location>
        <position position="166"/>
    </location>
    <ligand>
        <name>2',3'-cUAMP</name>
        <dbReference type="ChEBI" id="CHEBI:228269"/>
    </ligand>
</feature>
<feature type="binding site" evidence="12 43">
    <location>
        <position position="166"/>
    </location>
    <ligand>
        <name>3',3'-cGAMP</name>
        <dbReference type="ChEBI" id="CHEBI:71501"/>
    </ligand>
</feature>
<feature type="binding site" evidence="10 40">
    <location>
        <begin position="237"/>
        <end position="240"/>
    </location>
    <ligand>
        <name>3',3'-c-di-GMP</name>
        <dbReference type="ChEBI" id="CHEBI:58805"/>
    </ligand>
</feature>
<feature type="binding site" evidence="12 42">
    <location>
        <position position="237"/>
    </location>
    <ligand>
        <name>2',3'-cGAMP</name>
        <dbReference type="ChEBI" id="CHEBI:143093"/>
    </ligand>
</feature>
<feature type="binding site" evidence="2">
    <location>
        <position position="237"/>
    </location>
    <ligand>
        <name>2',3'-cUAMP</name>
        <dbReference type="ChEBI" id="CHEBI:228269"/>
    </ligand>
</feature>
<feature type="binding site" evidence="12 43">
    <location>
        <position position="237"/>
    </location>
    <ligand>
        <name>3',3'-cGAMP</name>
        <dbReference type="ChEBI" id="CHEBI:71501"/>
    </ligand>
</feature>
<feature type="binding site" evidence="12 42">
    <location>
        <position position="262"/>
    </location>
    <ligand>
        <name>2',3'-cGAMP</name>
        <dbReference type="ChEBI" id="CHEBI:143093"/>
    </ligand>
</feature>
<feature type="binding site" evidence="2">
    <location>
        <position position="262"/>
    </location>
    <ligand>
        <name>2',3'-cUAMP</name>
        <dbReference type="ChEBI" id="CHEBI:228269"/>
    </ligand>
</feature>
<feature type="binding site" evidence="10 40">
    <location>
        <position position="262"/>
    </location>
    <ligand>
        <name>3',3'-c-di-GMP</name>
        <dbReference type="ChEBI" id="CHEBI:58805"/>
    </ligand>
</feature>
<feature type="modified residue" description="Phosphoserine" evidence="2">
    <location>
        <position position="240"/>
    </location>
</feature>
<feature type="modified residue" description="Phosphoserine; by MAP3K7" evidence="27">
    <location>
        <position position="354"/>
    </location>
</feature>
<feature type="modified residue" description="Phosphoserine; by TBK1" evidence="38">
    <location>
        <position position="357"/>
    </location>
</feature>
<feature type="modified residue" description="Phosphoserine; by TBK1" evidence="13 18">
    <location>
        <position position="365"/>
    </location>
</feature>
<feature type="lipid moiety-binding region" description="S-palmitoyl cysteine" evidence="17">
    <location>
        <position position="88"/>
    </location>
</feature>
<feature type="lipid moiety-binding region" description="S-palmitoyl cysteine" evidence="17">
    <location>
        <position position="91"/>
    </location>
</feature>
<feature type="cross-link" description="Glycyl lysine isopeptide (Lys-Gly) (interchain with G-Cter in ubiquitin)" evidence="28">
    <location>
        <position position="19"/>
    </location>
</feature>
<feature type="cross-link" description="Glycyl lysine isopeptide (Lys-Gly) (interchain with G-Cter in ubiquitin)" evidence="2">
    <location>
        <position position="150"/>
    </location>
</feature>
<feature type="cross-link" description="Glycyl lysine isopeptide (Lys-Gly) (interchain with G-Cter in ubiquitin)" evidence="2">
    <location>
        <position position="235"/>
    </location>
</feature>
<feature type="cross-link" description="Glycyl lysine isopeptide (Lys-Gly) (interchain with G-Cter in SUMO)" evidence="18">
    <location>
        <position position="337"/>
    </location>
</feature>
<feature type="splice variant" id="VSP_022284" description="In isoform 2." evidence="29">
    <original>M</original>
    <variation>MIVESFGASGNPVGPCHFWSLYGVLLGVHWSVLHLGTFRGIRSAGLWLLM</variation>
    <location>
        <position position="1"/>
    </location>
</feature>
<feature type="splice variant" id="VSP_022285" description="In isoform 3." evidence="29">
    <location>
        <begin position="76"/>
        <end position="116"/>
    </location>
</feature>
<feature type="mutagenesis site" description="Strong loss of MARCHF5-mediated ubiquitination." evidence="28">
    <original>K</original>
    <variation>R</variation>
    <location>
        <position position="19"/>
    </location>
</feature>
<feature type="mutagenesis site" description="Does not affect palmitoylation." evidence="17">
    <original>CC</original>
    <variation>SS</variation>
    <location>
        <begin position="64"/>
        <end position="65"/>
    </location>
</feature>
<feature type="mutagenesis site" description="Abolished palmitoylation." evidence="17">
    <original>CLGC</original>
    <variation>SLGS</variation>
    <location>
        <begin position="88"/>
        <end position="91"/>
    </location>
</feature>
<feature type="mutagenesis site" description="Abolished inhibition by nitrofuran derivatives C-178 and C-176; abolished palmitoylation." evidence="23">
    <original>C</original>
    <variation>A</variation>
    <variation>S</variation>
    <location>
        <position position="91"/>
    </location>
</feature>
<feature type="mutagenesis site" description="Does not affect palmitoylation." evidence="17">
    <original>C</original>
    <variation>S</variation>
    <location>
        <position position="147"/>
    </location>
</feature>
<feature type="mutagenesis site" description="Decrease in cGAMP-binding." evidence="9">
    <original>S</original>
    <variation>A</variation>
    <location>
        <position position="161"/>
    </location>
</feature>
<feature type="mutagenesis site" description="Does not affect palmitoylation." evidence="17">
    <original>C</original>
    <variation>S</variation>
    <location>
        <position position="205"/>
    </location>
</feature>
<feature type="mutagenesis site" description="Strongly decreases affinity for the synthetic compound 5,6-dimethylxanthenone 4-acetic acid (DMXAA)." evidence="16">
    <original>I</original>
    <variation>A</variation>
    <variation>G</variation>
    <variation>T</variation>
    <location>
        <position position="229"/>
    </location>
</feature>
<feature type="mutagenesis site" description="Strong decrease in cGAMP-binding." evidence="9">
    <original>Y</original>
    <variation>S</variation>
    <location>
        <position position="239"/>
    </location>
</feature>
<feature type="mutagenesis site" description="Strong decrease in cGAMP-binding." evidence="9">
    <original>N</original>
    <variation>A</variation>
    <location>
        <position position="241"/>
    </location>
</feature>
<feature type="mutagenesis site" description="Does not affect palmitoylation." evidence="17">
    <original>C</original>
    <variation>S</variation>
    <location>
        <position position="256"/>
    </location>
</feature>
<feature type="mutagenesis site" description="Does not affect palmitoylation." evidence="17">
    <original>C</original>
    <variation>S</variation>
    <location>
        <position position="291"/>
    </location>
</feature>
<feature type="mutagenesis site" description="Does not affect palmitoylation." evidence="17">
    <original>C</original>
    <variation>S</variation>
    <location>
        <position position="308"/>
    </location>
</feature>
<feature type="mutagenesis site" description="Decreased relocalization to autophagosomes and subsequent degradation." evidence="18">
    <original>QE</original>
    <variation>AA</variation>
    <location>
        <begin position="326"/>
        <end position="327"/>
    </location>
</feature>
<feature type="mutagenesis site" description="Abolished sumoylation by TRIM38, leading to decreased stability." evidence="18">
    <original>K</original>
    <variation>R</variation>
    <location>
        <position position="337"/>
    </location>
</feature>
<feature type="mutagenesis site" description="Induces a decrease in phosphorylation by TBK1, leading to reduced ability to activate IRF3." evidence="13">
    <original>S</original>
    <variation>A</variation>
    <location>
        <position position="357"/>
    </location>
</feature>
<feature type="mutagenesis site" description="Abolished ability to activate IRF3." evidence="13">
    <original>S</original>
    <variation>A</variation>
    <location>
        <position position="365"/>
    </location>
</feature>
<feature type="sequence conflict" description="In Ref. 3; BAE27042." evidence="37" ref="3">
    <original>P</original>
    <variation>Q</variation>
    <location>
        <position position="11"/>
    </location>
</feature>
<feature type="sequence conflict" description="In Ref. 3; BAB27972." evidence="37" ref="3">
    <original>P</original>
    <variation>S</variation>
    <location>
        <position position="39"/>
    </location>
</feature>
<feature type="sequence conflict" description="In Ref. 3; BAE42563." evidence="37" ref="3">
    <original>M</original>
    <variation>V</variation>
    <location>
        <position position="98"/>
    </location>
</feature>
<feature type="sequence conflict" description="In Ref. 3; BAC37010." evidence="37" ref="3">
    <original>T</original>
    <variation>N</variation>
    <location>
        <position position="111"/>
    </location>
</feature>
<feature type="sequence conflict" description="In Ref. 3; BAE34068/BAE42310/BAE42224/BAE32222/BAE34517." evidence="37" ref="3">
    <original>N</original>
    <variation>D</variation>
    <location>
        <position position="210"/>
    </location>
</feature>
<feature type="sequence conflict" description="In Ref. 3; BAC37010." evidence="37" ref="3">
    <original>E</original>
    <variation>K</variation>
    <location>
        <position position="315"/>
    </location>
</feature>
<feature type="helix" evidence="45">
    <location>
        <begin position="156"/>
        <end position="164"/>
    </location>
</feature>
<feature type="helix" evidence="45">
    <location>
        <begin position="167"/>
        <end position="170"/>
    </location>
</feature>
<feature type="turn" evidence="46">
    <location>
        <begin position="171"/>
        <end position="173"/>
    </location>
</feature>
<feature type="helix" evidence="45">
    <location>
        <begin position="174"/>
        <end position="184"/>
    </location>
</feature>
<feature type="turn" evidence="45">
    <location>
        <begin position="185"/>
        <end position="189"/>
    </location>
</feature>
<feature type="helix" evidence="45">
    <location>
        <begin position="192"/>
        <end position="194"/>
    </location>
</feature>
<feature type="strand" evidence="45">
    <location>
        <begin position="195"/>
        <end position="202"/>
    </location>
</feature>
<feature type="helix" evidence="45">
    <location>
        <begin position="211"/>
        <end position="213"/>
    </location>
</feature>
<feature type="strand" evidence="45">
    <location>
        <begin position="218"/>
        <end position="223"/>
    </location>
</feature>
<feature type="strand" evidence="45">
    <location>
        <begin position="227"/>
        <end position="231"/>
    </location>
</feature>
<feature type="strand" evidence="45">
    <location>
        <begin position="234"/>
        <end position="239"/>
    </location>
</feature>
<feature type="strand" evidence="45">
    <location>
        <begin position="242"/>
        <end position="248"/>
    </location>
</feature>
<feature type="strand" evidence="45">
    <location>
        <begin position="251"/>
        <end position="260"/>
    </location>
</feature>
<feature type="helix" evidence="45">
    <location>
        <begin position="262"/>
        <end position="272"/>
    </location>
</feature>
<feature type="turn" evidence="45">
    <location>
        <begin position="274"/>
        <end position="276"/>
    </location>
</feature>
<feature type="helix" evidence="45">
    <location>
        <begin position="280"/>
        <end position="298"/>
    </location>
</feature>
<feature type="helix" evidence="45">
    <location>
        <begin position="304"/>
        <end position="307"/>
    </location>
</feature>
<feature type="strand" evidence="45">
    <location>
        <begin position="308"/>
        <end position="313"/>
    </location>
</feature>
<feature type="strand" evidence="45">
    <location>
        <begin position="317"/>
        <end position="319"/>
    </location>
</feature>
<feature type="helix" evidence="45">
    <location>
        <begin position="324"/>
        <end position="333"/>
    </location>
</feature>
<protein>
    <recommendedName>
        <fullName evidence="31 34">Stimulator of interferon genes protein</fullName>
        <shortName evidence="31 34 35">mSTING</shortName>
    </recommendedName>
    <alternativeName>
        <fullName evidence="33">Endoplasmic reticulum interferon stimulator</fullName>
        <shortName evidence="33">ERIS</shortName>
    </alternativeName>
    <alternativeName>
        <fullName evidence="32">Mediator of IRF3 activation</fullName>
        <shortName evidence="32">MMITA</shortName>
    </alternativeName>
    <alternativeName>
        <fullName>Transmembrane protein 173</fullName>
    </alternativeName>
</protein>
<dbReference type="EMBL" id="FJ222242">
    <property type="protein sequence ID" value="ACI46649.1"/>
    <property type="molecule type" value="mRNA"/>
</dbReference>
<dbReference type="EMBL" id="DQ910493">
    <property type="protein sequence ID" value="ABI78935.1"/>
    <property type="molecule type" value="mRNA"/>
</dbReference>
<dbReference type="EMBL" id="AK012006">
    <property type="protein sequence ID" value="BAB27972.1"/>
    <property type="molecule type" value="mRNA"/>
</dbReference>
<dbReference type="EMBL" id="AK077788">
    <property type="protein sequence ID" value="BAC37010.1"/>
    <property type="status" value="ALT_SEQ"/>
    <property type="molecule type" value="mRNA"/>
</dbReference>
<dbReference type="EMBL" id="AK089405">
    <property type="protein sequence ID" value="BAC40870.1"/>
    <property type="molecule type" value="mRNA"/>
</dbReference>
<dbReference type="EMBL" id="AK146284">
    <property type="protein sequence ID" value="BAE27042.1"/>
    <property type="molecule type" value="mRNA"/>
</dbReference>
<dbReference type="EMBL" id="AK153868">
    <property type="protein sequence ID" value="BAE32222.1"/>
    <property type="molecule type" value="mRNA"/>
</dbReference>
<dbReference type="EMBL" id="AK157370">
    <property type="protein sequence ID" value="BAE34068.1"/>
    <property type="molecule type" value="mRNA"/>
</dbReference>
<dbReference type="EMBL" id="AK158458">
    <property type="protein sequence ID" value="BAE34517.1"/>
    <property type="molecule type" value="mRNA"/>
</dbReference>
<dbReference type="EMBL" id="AK170724">
    <property type="protein sequence ID" value="BAE41981.1"/>
    <property type="molecule type" value="mRNA"/>
</dbReference>
<dbReference type="EMBL" id="AK171065">
    <property type="protein sequence ID" value="BAE42224.1"/>
    <property type="molecule type" value="mRNA"/>
</dbReference>
<dbReference type="EMBL" id="AK171203">
    <property type="protein sequence ID" value="BAE42310.1"/>
    <property type="molecule type" value="mRNA"/>
</dbReference>
<dbReference type="EMBL" id="AK171612">
    <property type="protein sequence ID" value="BAE42563.1"/>
    <property type="status" value="ALT_FRAME"/>
    <property type="molecule type" value="mRNA"/>
</dbReference>
<dbReference type="EMBL" id="CH466557">
    <property type="protein sequence ID" value="EDK97142.1"/>
    <property type="molecule type" value="Genomic_DNA"/>
</dbReference>
<dbReference type="EMBL" id="BC027757">
    <property type="protein sequence ID" value="AAH27757.1"/>
    <property type="status" value="ALT_INIT"/>
    <property type="molecule type" value="mRNA"/>
</dbReference>
<dbReference type="EMBL" id="BC046640">
    <property type="protein sequence ID" value="AAH46640.1"/>
    <property type="molecule type" value="mRNA"/>
</dbReference>
<dbReference type="CCDS" id="CCDS50253.1">
    <molecule id="Q3TBT3-1"/>
</dbReference>
<dbReference type="CCDS" id="CCDS89220.1">
    <molecule id="Q3TBT3-3"/>
</dbReference>
<dbReference type="RefSeq" id="NP_001276520.1">
    <molecule id="Q3TBT3-2"/>
    <property type="nucleotide sequence ID" value="NM_001289591.1"/>
</dbReference>
<dbReference type="RefSeq" id="NP_001276521.1">
    <molecule id="Q3TBT3-3"/>
    <property type="nucleotide sequence ID" value="NM_001289592.1"/>
</dbReference>
<dbReference type="RefSeq" id="NP_082537.1">
    <molecule id="Q3TBT3-1"/>
    <property type="nucleotide sequence ID" value="NM_028261.1"/>
</dbReference>
<dbReference type="PDB" id="4JC5">
    <property type="method" value="X-ray"/>
    <property type="resolution" value="2.75 A"/>
    <property type="chains" value="A/B=149-348"/>
</dbReference>
<dbReference type="PDB" id="4KBY">
    <property type="method" value="X-ray"/>
    <property type="resolution" value="2.36 A"/>
    <property type="chains" value="A/B=138-344"/>
</dbReference>
<dbReference type="PDB" id="4KC0">
    <property type="method" value="X-ray"/>
    <property type="resolution" value="2.20 A"/>
    <property type="chains" value="A/B=138-344"/>
</dbReference>
<dbReference type="PDB" id="4LOJ">
    <property type="method" value="X-ray"/>
    <property type="resolution" value="1.77 A"/>
    <property type="chains" value="A/B=154-340"/>
</dbReference>
<dbReference type="PDB" id="4LOK">
    <property type="method" value="X-ray"/>
    <property type="resolution" value="2.07 A"/>
    <property type="chains" value="A/B=154-340"/>
</dbReference>
<dbReference type="PDB" id="4LOL">
    <property type="method" value="X-ray"/>
    <property type="resolution" value="2.43 A"/>
    <property type="chains" value="A/B=154-340"/>
</dbReference>
<dbReference type="PDB" id="4YP1">
    <property type="method" value="X-ray"/>
    <property type="resolution" value="2.65 A"/>
    <property type="chains" value="A/B=138-344"/>
</dbReference>
<dbReference type="PDB" id="6XNN">
    <property type="method" value="X-ray"/>
    <property type="resolution" value="2.49 A"/>
    <property type="chains" value="A/B=154-340"/>
</dbReference>
<dbReference type="PDBsum" id="4JC5"/>
<dbReference type="PDBsum" id="4KBY"/>
<dbReference type="PDBsum" id="4KC0"/>
<dbReference type="PDBsum" id="4LOJ"/>
<dbReference type="PDBsum" id="4LOK"/>
<dbReference type="PDBsum" id="4LOL"/>
<dbReference type="PDBsum" id="4YP1"/>
<dbReference type="PDBsum" id="6XNN"/>
<dbReference type="SMR" id="Q3TBT3"/>
<dbReference type="BioGRID" id="215410">
    <property type="interactions" value="1773"/>
</dbReference>
<dbReference type="ComplexPortal" id="CPX-2128">
    <property type="entry name" value="Sting complex"/>
</dbReference>
<dbReference type="DIP" id="DIP-59959N"/>
<dbReference type="FunCoup" id="Q3TBT3">
    <property type="interactions" value="586"/>
</dbReference>
<dbReference type="IntAct" id="Q3TBT3">
    <property type="interactions" value="106"/>
</dbReference>
<dbReference type="MINT" id="Q3TBT3"/>
<dbReference type="STRING" id="10090.ENSMUSP00000111393"/>
<dbReference type="BindingDB" id="Q3TBT3"/>
<dbReference type="ChEMBL" id="CHEMBL4523311"/>
<dbReference type="DrugCentral" id="Q3TBT3"/>
<dbReference type="GuidetoPHARMACOLOGY" id="2902"/>
<dbReference type="iPTMnet" id="Q3TBT3"/>
<dbReference type="PhosphoSitePlus" id="Q3TBT3"/>
<dbReference type="SwissPalm" id="Q3TBT3"/>
<dbReference type="PaxDb" id="10090-ENSMUSP00000111393"/>
<dbReference type="PeptideAtlas" id="Q3TBT3"/>
<dbReference type="ProteomicsDB" id="258752">
    <molecule id="Q3TBT3-1"/>
</dbReference>
<dbReference type="ProteomicsDB" id="258753">
    <molecule id="Q3TBT3-2"/>
</dbReference>
<dbReference type="ProteomicsDB" id="258754">
    <molecule id="Q3TBT3-3"/>
</dbReference>
<dbReference type="Pumba" id="Q3TBT3"/>
<dbReference type="Antibodypedia" id="26796">
    <property type="antibodies" value="867 antibodies from 43 providers"/>
</dbReference>
<dbReference type="Ensembl" id="ENSMUST00000115728.5">
    <molecule id="Q3TBT3-1"/>
    <property type="protein sequence ID" value="ENSMUSP00000111393.4"/>
    <property type="gene ID" value="ENSMUSG00000024349.11"/>
</dbReference>
<dbReference type="Ensembl" id="ENSMUST00000235495.2">
    <molecule id="Q3TBT3-3"/>
    <property type="protein sequence ID" value="ENSMUSP00000157789.2"/>
    <property type="gene ID" value="ENSMUSG00000024349.11"/>
</dbReference>
<dbReference type="Ensembl" id="ENSMUST00000237919.2">
    <molecule id="Q3TBT3-1"/>
    <property type="protein sequence ID" value="ENSMUSP00000157408.2"/>
    <property type="gene ID" value="ENSMUSG00000024349.11"/>
</dbReference>
<dbReference type="GeneID" id="72512"/>
<dbReference type="KEGG" id="mmu:72512"/>
<dbReference type="UCSC" id="uc008emt.3">
    <molecule id="Q3TBT3-1"/>
    <property type="organism name" value="mouse"/>
</dbReference>
<dbReference type="UCSC" id="uc008emu.3">
    <molecule id="Q3TBT3-3"/>
    <property type="organism name" value="mouse"/>
</dbReference>
<dbReference type="UCSC" id="uc008emv.3">
    <molecule id="Q3TBT3-2"/>
    <property type="organism name" value="mouse"/>
</dbReference>
<dbReference type="AGR" id="MGI:1919762"/>
<dbReference type="CTD" id="340061"/>
<dbReference type="MGI" id="MGI:1919762">
    <property type="gene designation" value="Sting1"/>
</dbReference>
<dbReference type="VEuPathDB" id="HostDB:ENSMUSG00000024349"/>
<dbReference type="eggNOG" id="ENOG502R15M">
    <property type="taxonomic scope" value="Eukaryota"/>
</dbReference>
<dbReference type="GeneTree" id="ENSGT00390000008582"/>
<dbReference type="HOGENOM" id="CLU_062449_0_0_1"/>
<dbReference type="InParanoid" id="Q3TBT3"/>
<dbReference type="OMA" id="QYGQAGF"/>
<dbReference type="OrthoDB" id="6053839at2759"/>
<dbReference type="PhylomeDB" id="Q3TBT3"/>
<dbReference type="TreeFam" id="TF324444"/>
<dbReference type="Reactome" id="R-MMU-1834941">
    <property type="pathway name" value="STING mediated induction of host immune responses"/>
</dbReference>
<dbReference type="Reactome" id="R-MMU-3134975">
    <property type="pathway name" value="Regulation of innate immune responses to cytosolic DNA"/>
</dbReference>
<dbReference type="Reactome" id="R-MMU-3249367">
    <property type="pathway name" value="STAT6-mediated induction of chemokines"/>
</dbReference>
<dbReference type="Reactome" id="R-MMU-3270619">
    <property type="pathway name" value="IRF3-mediated induction of type I IFN"/>
</dbReference>
<dbReference type="Reactome" id="R-MMU-6798695">
    <property type="pathway name" value="Neutrophil degranulation"/>
</dbReference>
<dbReference type="BioGRID-ORCS" id="72512">
    <property type="hits" value="1 hit in 80 CRISPR screens"/>
</dbReference>
<dbReference type="ChiTaRS" id="Tmem173">
    <property type="organism name" value="mouse"/>
</dbReference>
<dbReference type="EvolutionaryTrace" id="Q3TBT3"/>
<dbReference type="PRO" id="PR:Q3TBT3"/>
<dbReference type="Proteomes" id="UP000000589">
    <property type="component" value="Chromosome 18"/>
</dbReference>
<dbReference type="RNAct" id="Q3TBT3">
    <property type="molecule type" value="protein"/>
</dbReference>
<dbReference type="Bgee" id="ENSMUSG00000024349">
    <property type="expression patterns" value="Expressed in lumbar dorsal root ganglion and 172 other cell types or tissues"/>
</dbReference>
<dbReference type="ExpressionAtlas" id="Q3TBT3">
    <property type="expression patterns" value="baseline and differential"/>
</dbReference>
<dbReference type="GO" id="GO:0005776">
    <property type="term" value="C:autophagosome"/>
    <property type="evidence" value="ECO:0000314"/>
    <property type="project" value="UniProtKB"/>
</dbReference>
<dbReference type="GO" id="GO:0000421">
    <property type="term" value="C:autophagosome membrane"/>
    <property type="evidence" value="ECO:0007669"/>
    <property type="project" value="UniProtKB-SubCell"/>
</dbReference>
<dbReference type="GO" id="GO:0036064">
    <property type="term" value="C:ciliary basal body"/>
    <property type="evidence" value="ECO:0007669"/>
    <property type="project" value="Ensembl"/>
</dbReference>
<dbReference type="GO" id="GO:0005737">
    <property type="term" value="C:cytoplasm"/>
    <property type="evidence" value="ECO:0000314"/>
    <property type="project" value="UniProtKB"/>
</dbReference>
<dbReference type="GO" id="GO:0005829">
    <property type="term" value="C:cytosol"/>
    <property type="evidence" value="ECO:0007669"/>
    <property type="project" value="Ensembl"/>
</dbReference>
<dbReference type="GO" id="GO:0005783">
    <property type="term" value="C:endoplasmic reticulum"/>
    <property type="evidence" value="ECO:0000314"/>
    <property type="project" value="MGI"/>
</dbReference>
<dbReference type="GO" id="GO:0005789">
    <property type="term" value="C:endoplasmic reticulum membrane"/>
    <property type="evidence" value="ECO:0000314"/>
    <property type="project" value="UniProtKB"/>
</dbReference>
<dbReference type="GO" id="GO:0033116">
    <property type="term" value="C:endoplasmic reticulum-Golgi intermediate compartment membrane"/>
    <property type="evidence" value="ECO:0000314"/>
    <property type="project" value="UniProtKB"/>
</dbReference>
<dbReference type="GO" id="GO:0005768">
    <property type="term" value="C:endosome"/>
    <property type="evidence" value="ECO:0007669"/>
    <property type="project" value="Ensembl"/>
</dbReference>
<dbReference type="GO" id="GO:0005794">
    <property type="term" value="C:Golgi apparatus"/>
    <property type="evidence" value="ECO:0000314"/>
    <property type="project" value="UniProtKB"/>
</dbReference>
<dbReference type="GO" id="GO:0000139">
    <property type="term" value="C:Golgi membrane"/>
    <property type="evidence" value="ECO:0000314"/>
    <property type="project" value="UniProtKB"/>
</dbReference>
<dbReference type="GO" id="GO:0005765">
    <property type="term" value="C:lysosomal membrane"/>
    <property type="evidence" value="ECO:0007669"/>
    <property type="project" value="UniProtKB-SubCell"/>
</dbReference>
<dbReference type="GO" id="GO:0005741">
    <property type="term" value="C:mitochondrial outer membrane"/>
    <property type="evidence" value="ECO:0007669"/>
    <property type="project" value="UniProtKB-SubCell"/>
</dbReference>
<dbReference type="GO" id="GO:0005654">
    <property type="term" value="C:nucleoplasm"/>
    <property type="evidence" value="ECO:0007669"/>
    <property type="project" value="Ensembl"/>
</dbReference>
<dbReference type="GO" id="GO:0048471">
    <property type="term" value="C:perinuclear region of cytoplasm"/>
    <property type="evidence" value="ECO:0000314"/>
    <property type="project" value="UniProtKB"/>
</dbReference>
<dbReference type="GO" id="GO:0005777">
    <property type="term" value="C:peroxisome"/>
    <property type="evidence" value="ECO:0000314"/>
    <property type="project" value="MGI"/>
</dbReference>
<dbReference type="GO" id="GO:0005886">
    <property type="term" value="C:plasma membrane"/>
    <property type="evidence" value="ECO:0007669"/>
    <property type="project" value="UniProtKB-SubCell"/>
</dbReference>
<dbReference type="GO" id="GO:1990231">
    <property type="term" value="C:STING complex"/>
    <property type="evidence" value="ECO:0000353"/>
    <property type="project" value="ComplexPortal"/>
</dbReference>
<dbReference type="GO" id="GO:0061507">
    <property type="term" value="F:2',3'-cyclic GMP-AMP binding"/>
    <property type="evidence" value="ECO:0000314"/>
    <property type="project" value="UniProtKB"/>
</dbReference>
<dbReference type="GO" id="GO:0035438">
    <property type="term" value="F:cyclic-di-GMP binding"/>
    <property type="evidence" value="ECO:0000314"/>
    <property type="project" value="UniProtKB"/>
</dbReference>
<dbReference type="GO" id="GO:0042803">
    <property type="term" value="F:protein homodimerization activity"/>
    <property type="evidence" value="ECO:0000250"/>
    <property type="project" value="UniProtKB"/>
</dbReference>
<dbReference type="GO" id="GO:0019901">
    <property type="term" value="F:protein kinase binding"/>
    <property type="evidence" value="ECO:0007669"/>
    <property type="project" value="Ensembl"/>
</dbReference>
<dbReference type="GO" id="GO:0015252">
    <property type="term" value="F:proton channel activity"/>
    <property type="evidence" value="ECO:0000250"/>
    <property type="project" value="UniProtKB"/>
</dbReference>
<dbReference type="GO" id="GO:0061629">
    <property type="term" value="F:RNA polymerase II-specific DNA-binding transcription factor binding"/>
    <property type="evidence" value="ECO:0007669"/>
    <property type="project" value="Ensembl"/>
</dbReference>
<dbReference type="GO" id="GO:0035591">
    <property type="term" value="F:signaling adaptor activity"/>
    <property type="evidence" value="ECO:0000250"/>
    <property type="project" value="UniProtKB"/>
</dbReference>
<dbReference type="GO" id="GO:0031625">
    <property type="term" value="F:ubiquitin protein ligase binding"/>
    <property type="evidence" value="ECO:0000353"/>
    <property type="project" value="UniProtKB"/>
</dbReference>
<dbReference type="GO" id="GO:0002218">
    <property type="term" value="P:activation of innate immune response"/>
    <property type="evidence" value="ECO:0000314"/>
    <property type="project" value="ComplexPortal"/>
</dbReference>
<dbReference type="GO" id="GO:0140374">
    <property type="term" value="P:antiviral innate immune response"/>
    <property type="evidence" value="ECO:0007669"/>
    <property type="project" value="Ensembl"/>
</dbReference>
<dbReference type="GO" id="GO:0000045">
    <property type="term" value="P:autophagosome assembly"/>
    <property type="evidence" value="ECO:0000315"/>
    <property type="project" value="UniProtKB"/>
</dbReference>
<dbReference type="GO" id="GO:0071360">
    <property type="term" value="P:cellular response to exogenous dsRNA"/>
    <property type="evidence" value="ECO:0007669"/>
    <property type="project" value="Ensembl"/>
</dbReference>
<dbReference type="GO" id="GO:0035458">
    <property type="term" value="P:cellular response to interferon-beta"/>
    <property type="evidence" value="ECO:0000315"/>
    <property type="project" value="MGI"/>
</dbReference>
<dbReference type="GO" id="GO:0140896">
    <property type="term" value="P:cGAS/STING signaling pathway"/>
    <property type="evidence" value="ECO:0000314"/>
    <property type="project" value="UniProtKB"/>
</dbReference>
<dbReference type="GO" id="GO:0051607">
    <property type="term" value="P:defense response to virus"/>
    <property type="evidence" value="ECO:0000315"/>
    <property type="project" value="UniProtKB"/>
</dbReference>
<dbReference type="GO" id="GO:0045087">
    <property type="term" value="P:innate immune response"/>
    <property type="evidence" value="ECO:0000314"/>
    <property type="project" value="ComplexPortal"/>
</dbReference>
<dbReference type="GO" id="GO:0002230">
    <property type="term" value="P:positive regulation of defense response to virus by host"/>
    <property type="evidence" value="ECO:0007669"/>
    <property type="project" value="Ensembl"/>
</dbReference>
<dbReference type="GO" id="GO:0032728">
    <property type="term" value="P:positive regulation of interferon-beta production"/>
    <property type="evidence" value="ECO:0000315"/>
    <property type="project" value="UniProtKB"/>
</dbReference>
<dbReference type="GO" id="GO:0016239">
    <property type="term" value="P:positive regulation of macroautophagy"/>
    <property type="evidence" value="ECO:0000315"/>
    <property type="project" value="UniProtKB"/>
</dbReference>
<dbReference type="GO" id="GO:0045944">
    <property type="term" value="P:positive regulation of transcription by RNA polymerase II"/>
    <property type="evidence" value="ECO:0000314"/>
    <property type="project" value="MGI"/>
</dbReference>
<dbReference type="GO" id="GO:0032481">
    <property type="term" value="P:positive regulation of type I interferon production"/>
    <property type="evidence" value="ECO:0000314"/>
    <property type="project" value="UniProtKB"/>
</dbReference>
<dbReference type="GO" id="GO:0060340">
    <property type="term" value="P:positive regulation of type I interferon-mediated signaling pathway"/>
    <property type="evidence" value="ECO:0000314"/>
    <property type="project" value="ComplexPortal"/>
</dbReference>
<dbReference type="GO" id="GO:0051259">
    <property type="term" value="P:protein complex oligomerization"/>
    <property type="evidence" value="ECO:0007669"/>
    <property type="project" value="Ensembl"/>
</dbReference>
<dbReference type="GO" id="GO:0070972">
    <property type="term" value="P:protein localization to endoplasmic reticulum"/>
    <property type="evidence" value="ECO:0007669"/>
    <property type="project" value="Ensembl"/>
</dbReference>
<dbReference type="GO" id="GO:0010468">
    <property type="term" value="P:regulation of gene expression"/>
    <property type="evidence" value="ECO:0000316"/>
    <property type="project" value="MGI"/>
</dbReference>
<dbReference type="GO" id="GO:0050727">
    <property type="term" value="P:regulation of inflammatory response"/>
    <property type="evidence" value="ECO:0000316"/>
    <property type="project" value="MGI"/>
</dbReference>
<dbReference type="GO" id="GO:0019222">
    <property type="term" value="P:regulation of metabolic process"/>
    <property type="evidence" value="ECO:0000316"/>
    <property type="project" value="MGI"/>
</dbReference>
<dbReference type="GO" id="GO:0061709">
    <property type="term" value="P:reticulophagy"/>
    <property type="evidence" value="ECO:0000314"/>
    <property type="project" value="UniProtKB"/>
</dbReference>
<dbReference type="CDD" id="cd22658">
    <property type="entry name" value="STING_C_metazoan-like"/>
    <property type="match status" value="1"/>
</dbReference>
<dbReference type="FunFam" id="1.20.5.5200:FF:000001">
    <property type="entry name" value="Stimulator of interferon genes protein"/>
    <property type="match status" value="1"/>
</dbReference>
<dbReference type="FunFam" id="3.40.50.12100:FF:000001">
    <property type="entry name" value="Stimulator of interferon genes protein"/>
    <property type="match status" value="1"/>
</dbReference>
<dbReference type="Gene3D" id="1.20.5.5200">
    <property type="match status" value="1"/>
</dbReference>
<dbReference type="Gene3D" id="3.40.50.12100">
    <property type="entry name" value="Stimulator of interferon genes protein"/>
    <property type="match status" value="1"/>
</dbReference>
<dbReference type="InterPro" id="IPR029158">
    <property type="entry name" value="STING"/>
</dbReference>
<dbReference type="InterPro" id="IPR047191">
    <property type="entry name" value="STING_C_chordates"/>
</dbReference>
<dbReference type="InterPro" id="IPR038623">
    <property type="entry name" value="STING_C_sf"/>
</dbReference>
<dbReference type="InterPro" id="IPR055432">
    <property type="entry name" value="STING_LBD"/>
</dbReference>
<dbReference type="InterPro" id="IPR055434">
    <property type="entry name" value="STING_TM"/>
</dbReference>
<dbReference type="PANTHER" id="PTHR34339">
    <property type="entry name" value="STIMULATOR OF INTERFERON GENES PROTEIN"/>
    <property type="match status" value="1"/>
</dbReference>
<dbReference type="PANTHER" id="PTHR34339:SF1">
    <property type="entry name" value="STIMULATOR OF INTERFERON GENES PROTEIN"/>
    <property type="match status" value="1"/>
</dbReference>
<dbReference type="Pfam" id="PF15009">
    <property type="entry name" value="STING_LBD"/>
    <property type="match status" value="1"/>
</dbReference>
<dbReference type="Pfam" id="PF23417">
    <property type="entry name" value="STING_TM"/>
    <property type="match status" value="1"/>
</dbReference>
<gene>
    <name evidence="39" type="primary">Sting1</name>
    <name evidence="33" type="synonym">Eris</name>
    <name evidence="32" type="synonym">Mita</name>
    <name evidence="30" type="synonym">Mpys</name>
    <name evidence="31 36" type="synonym">Sting</name>
    <name evidence="39" type="synonym">Tmem173</name>
</gene>
<proteinExistence type="evidence at protein level"/>
<organism>
    <name type="scientific">Mus musculus</name>
    <name type="common">Mouse</name>
    <dbReference type="NCBI Taxonomy" id="10090"/>
    <lineage>
        <taxon>Eukaryota</taxon>
        <taxon>Metazoa</taxon>
        <taxon>Chordata</taxon>
        <taxon>Craniata</taxon>
        <taxon>Vertebrata</taxon>
        <taxon>Euteleostomi</taxon>
        <taxon>Mammalia</taxon>
        <taxon>Eutheria</taxon>
        <taxon>Euarchontoglires</taxon>
        <taxon>Glires</taxon>
        <taxon>Rodentia</taxon>
        <taxon>Myomorpha</taxon>
        <taxon>Muroidea</taxon>
        <taxon>Muridae</taxon>
        <taxon>Murinae</taxon>
        <taxon>Mus</taxon>
        <taxon>Mus</taxon>
    </lineage>
</organism>
<evidence type="ECO:0000250" key="1">
    <source>
        <dbReference type="UniProtKB" id="E1C7U0"/>
    </source>
</evidence>
<evidence type="ECO:0000250" key="2">
    <source>
        <dbReference type="UniProtKB" id="Q86WV6"/>
    </source>
</evidence>
<evidence type="ECO:0000255" key="3"/>
<evidence type="ECO:0000269" key="4">
    <source>
    </source>
</evidence>
<evidence type="ECO:0000269" key="5">
    <source>
    </source>
</evidence>
<evidence type="ECO:0000269" key="6">
    <source>
    </source>
</evidence>
<evidence type="ECO:0000269" key="7">
    <source>
    </source>
</evidence>
<evidence type="ECO:0000269" key="8">
    <source>
    </source>
</evidence>
<evidence type="ECO:0000269" key="9">
    <source>
    </source>
</evidence>
<evidence type="ECO:0000269" key="10">
    <source>
    </source>
</evidence>
<evidence type="ECO:0000269" key="11">
    <source>
    </source>
</evidence>
<evidence type="ECO:0000269" key="12">
    <source>
    </source>
</evidence>
<evidence type="ECO:0000269" key="13">
    <source>
    </source>
</evidence>
<evidence type="ECO:0000269" key="14">
    <source>
    </source>
</evidence>
<evidence type="ECO:0000269" key="15">
    <source>
    </source>
</evidence>
<evidence type="ECO:0000269" key="16">
    <source>
    </source>
</evidence>
<evidence type="ECO:0000269" key="17">
    <source>
    </source>
</evidence>
<evidence type="ECO:0000269" key="18">
    <source>
    </source>
</evidence>
<evidence type="ECO:0000269" key="19">
    <source>
    </source>
</evidence>
<evidence type="ECO:0000269" key="20">
    <source>
    </source>
</evidence>
<evidence type="ECO:0000269" key="21">
    <source>
    </source>
</evidence>
<evidence type="ECO:0000269" key="22">
    <source>
    </source>
</evidence>
<evidence type="ECO:0000269" key="23">
    <source>
    </source>
</evidence>
<evidence type="ECO:0000269" key="24">
    <source>
    </source>
</evidence>
<evidence type="ECO:0000269" key="25">
    <source>
    </source>
</evidence>
<evidence type="ECO:0000269" key="26">
    <source>
    </source>
</evidence>
<evidence type="ECO:0000269" key="27">
    <source>
    </source>
</evidence>
<evidence type="ECO:0000269" key="28">
    <source>
    </source>
</evidence>
<evidence type="ECO:0000303" key="29">
    <source>
    </source>
</evidence>
<evidence type="ECO:0000303" key="30">
    <source>
    </source>
</evidence>
<evidence type="ECO:0000303" key="31">
    <source>
    </source>
</evidence>
<evidence type="ECO:0000303" key="32">
    <source>
    </source>
</evidence>
<evidence type="ECO:0000303" key="33">
    <source>
    </source>
</evidence>
<evidence type="ECO:0000303" key="34">
    <source>
    </source>
</evidence>
<evidence type="ECO:0000303" key="35">
    <source>
    </source>
</evidence>
<evidence type="ECO:0000303" key="36">
    <source>
    </source>
</evidence>
<evidence type="ECO:0000305" key="37"/>
<evidence type="ECO:0000305" key="38">
    <source>
    </source>
</evidence>
<evidence type="ECO:0000312" key="39">
    <source>
        <dbReference type="MGI" id="MGI:1919762"/>
    </source>
</evidence>
<evidence type="ECO:0007744" key="40">
    <source>
        <dbReference type="PDB" id="4KBY"/>
    </source>
</evidence>
<evidence type="ECO:0007744" key="41">
    <source>
        <dbReference type="PDB" id="4KC0"/>
    </source>
</evidence>
<evidence type="ECO:0007744" key="42">
    <source>
        <dbReference type="PDB" id="4LOJ"/>
    </source>
</evidence>
<evidence type="ECO:0007744" key="43">
    <source>
        <dbReference type="PDB" id="4LOK"/>
    </source>
</evidence>
<evidence type="ECO:0007744" key="44">
    <source>
        <dbReference type="PDB" id="4LOL"/>
    </source>
</evidence>
<evidence type="ECO:0007829" key="45">
    <source>
        <dbReference type="PDB" id="4LOJ"/>
    </source>
</evidence>
<evidence type="ECO:0007829" key="46">
    <source>
        <dbReference type="PDB" id="4LOK"/>
    </source>
</evidence>
<name>STING_MOUSE</name>
<comment type="function">
    <text evidence="2 4 5 6 7 8 9 10 11 12 13 14 15 16 17 19 21 23 24 26">Facilitator of innate immune signaling that acts as a sensor of cytosolic DNA from bacteria and viruses and promotes the production of type I interferon (IFN-alpha and IFN-beta) (PubMed:18818105, PubMed:19433799, PubMed:19776740, PubMed:26229117, PubMed:26669264, PubMed:27324217, PubMed:28529930, PubMed:29973723, PubMed:31346090). Innate immune response is triggered in response to non-CpG double-stranded DNA from viruses and bacteria delivered to the cytoplasm (PubMed:18818105, PubMed:19433799, PubMed:19776740, PubMed:26229117, PubMed:26669264). Acts by binding cyclic dinucleotides: recognizes and binds cyclic di-GMP (c-di-GMP), a second messenger produced by bacteria, cyclic UMP-AMP (2',3'-cUAMP), and cyclic GMP-AMP (cGAMP), a messenger produced by CGAS in response to DNA virus in the cytosol (PubMed:21947006, PubMed:23258412, PubMed:23519410, PubMed:23722158, PubMed:23910378). Upon binding to c-di-GMP, cUAMP or cGAMP, STING1 oligomerizes, translocates from the endoplasmic reticulum and is phosphorylated by TBK1 on the pLxIS motif, leading to recruitment and subsequent activation of the transcription factor IRF3 to induce expression of type I interferon and exert a potent anti-viral state (PubMed:25636800, PubMed:27324217, PubMed:29973723). Exhibits 2',3' phosphodiester linkage-specific ligand recognition: can bind both 2'-3' linked cGAMP (2'-3'-cGAMP) and 3'-3' linked cGAMP but is preferentially activated by 2'-3' linked cGAMP (PubMed:26300263). The preference for 2'-3'-cGAMP, compared to other linkage isomers is probably due to the ligand itself, whichs adopts an organized free-ligand conformation that resembles the STING1-bound conformation and pays low energy costs in changing into the active conformation (By similarity). In addition to promote the production of type I interferons, plays a direct role in autophagy (PubMed:30568238). Following cGAMP-binding, STING1 buds from the endoplasmic reticulum into COPII vesicles, which then form the endoplasmic reticulum-Golgi intermediate compartment (ERGIC) (By similarity). The ERGIC serves as the membrane source for WIPI2 recruitment and LC3 lipidation, leading to formation of autophagosomes that target cytosolic DNA or DNA viruses for degradation by the lysosome (By similarity). Promotes autophagy by acting as a proton channel that directs proton efflux from the Golgi to facilitate MAP1LC3B/LC3B lipidation (By similarity). The autophagy- and interferon-inducing activities can be uncoupled and autophagy induction is independent of TBK1 phosphorylation (By similarity). Autophagy is also triggered upon infection by bacteria: following c-di-GMP-binding, which is produced by live Gram-positive bacteria, promotes reticulophagy (PubMed:29056340). May be involved in translocon function, the translocon possibly being able to influence the induction of type I interferons (By similarity). May be involved in transduction of apoptotic signals via its association with the major histocompatibility complex class II (MHC-II) (PubMed:18559423).</text>
</comment>
<comment type="catalytic activity">
    <reaction evidence="2">
        <text>H(+)(in) = H(+)(out)</text>
        <dbReference type="Rhea" id="RHEA:34979"/>
        <dbReference type="ChEBI" id="CHEBI:15378"/>
    </reaction>
</comment>
<comment type="activity regulation">
    <text evidence="12 16 23">Activated by anticancer drug 5,6-dimethylxanthenone 4-acetic acid (DMXAA) (PubMed:23910378, PubMed:26669264). Specifically inhibited by nitrofuran derivatives C-178 and C-176, which covalently bind Cys-91 and prevent palmitoylation and subsequent activation od STING1 (PubMed:29973723).</text>
</comment>
<comment type="subunit">
    <text evidence="1 2 4 19 22 25 26 27">Homodimer; forms a homodimer in absence of cyclic nucleotide (c-di-GMP or cGAMP); 'Lys-63'-linked ubiquitination at Lys-150 is required for homodimerization (PubMed:18559423). Homotetramer; in presence of cyclic nucleotide (c-di-GMP or cGAMP), forms tetramers and higher-order oligomers through side-by-side packing (By similarity). Interacts (when phosphorylated) with IRF3; following activation and phosphorylation on the pLxIS motif by TBK1, recruits IRF3 (By similarity). Interacts with RIGI, MAVS and SSR2 (By similarity). Interacts with RNF5 and TRIM56 (By similarity). Interacts with TBK1; when homodimer, leading to subsequent production of IFN-beta (By similarity). Interacts with IFIT1 and IFIT2 (By similarity). Interacts with TRIM29; this interaction induces STING1 ubiquitination and subsequent degradation (By similarity). Associates with the MHC-II complex (PubMed:18559423). Interacts with STEEP1; interaction takes place upon cGAMP-activation and STING1 phosphorylation by MAP3K7/TAK1 and promotes STING1 translocation to COPII vesicles (By similarity). Interacts with SEC24A, SEC24B and SEC24C; promoting translocation to COPII vesicles (By similarity). Interacts (when ubiquitinated) with SQSTM1; leading to relocalization to autophagosomes (PubMed:29496741). Interacts with SURF4 (By similarity). Interacts with HNRNPA2B1 (PubMed:31320558). Interacts with ZDHHC1; ZDHHC1 constitutively interacts with STING1 and in presence of DNA viruses activates it by promoting its cGAMP-induced oligomerization and the recruitment of downstream signaling components (By similarity). Interacts with ZDHHC11; in presence of DNA viruses promotes the recruitment of IRF3 to STING1 (By similarity). Interacts with TOMM70 (By similarity). Interacts with IFI204 (PubMed:28529930). Interacts with TAB1; promoting recruitment of TAB1 to the endoplasmic reticulum membrane and subsequent activation of MAP3K7/TAK1 (PubMed:37832545). Interacts (via transmembrane domain) with TMEM203 (PubMed:31346090). Interacts with DDX41 (By similarity).</text>
</comment>
<comment type="interaction">
    <interactant intactId="EBI-3862093">
        <id>Q3TBT3</id>
    </interactant>
    <interactant intactId="EBI-2551902">
        <id>Q91VN6</id>
        <label>Ddx41</label>
    </interactant>
    <organismsDiffer>false</organismsDiffer>
    <experiments>4</experiments>
</comment>
<comment type="interaction">
    <interactant intactId="EBI-3862093">
        <id>Q3TBT3</id>
    </interactant>
    <interactant intactId="EBI-2891155">
        <id>Q07113</id>
        <label>Igf2r</label>
    </interactant>
    <organismsDiffer>false</organismsDiffer>
    <experiments>2</experiments>
</comment>
<comment type="interaction">
    <interactant intactId="EBI-3862093">
        <id>Q3TBT3</id>
    </interactant>
    <interactant intactId="EBI-764193">
        <id>Q9WUN2</id>
        <label>Tbk1</label>
    </interactant>
    <organismsDiffer>false</organismsDiffer>
    <experiments>3</experiments>
</comment>
<comment type="subcellular location">
    <subcellularLocation>
        <location evidence="7 17 26 27">Endoplasmic reticulum membrane</location>
        <topology evidence="3">Multi-pass membrane protein</topology>
    </subcellularLocation>
    <subcellularLocation>
        <location evidence="2">Cytoplasm</location>
        <location evidence="2">Perinuclear region</location>
    </subcellularLocation>
    <subcellularLocation>
        <location evidence="20 26 27">Endoplasmic reticulum-Golgi intermediate compartment membrane</location>
        <topology evidence="3">Multi-pass membrane protein</topology>
    </subcellularLocation>
    <subcellularLocation>
        <location evidence="17 23">Golgi apparatus membrane</location>
        <topology evidence="3">Multi-pass membrane protein</topology>
    </subcellularLocation>
    <subcellularLocation>
        <location evidence="21 22">Cytoplasmic vesicle</location>
        <location evidence="21 22">Autophagosome membrane</location>
        <topology evidence="3">Multi-pass membrane protein</topology>
    </subcellularLocation>
    <subcellularLocation>
        <location evidence="4">Mitochondrion outer membrane</location>
        <topology evidence="3">Multi-pass membrane protein</topology>
    </subcellularLocation>
    <subcellularLocation>
        <location evidence="4">Cell membrane</location>
        <topology evidence="3">Multi-pass membrane protein</topology>
    </subcellularLocation>
    <subcellularLocation>
        <location evidence="26">Lysosome membrane</location>
        <topology evidence="3">Multi-pass membrane protein</topology>
    </subcellularLocation>
    <text evidence="2 26">In response to double-stranded DNA stimulation, translocates from the endoplasmic reticulum through the endoplasmic reticulum-Golgi intermediate compartment and Golgi to post-Golgi vesicles, where the kinase TBK1 is recruited. Upon cGAMP-binding, translocates to the endoplasmic reticulum-Golgi intermediate compartment (ERGIC) in a process that is dependent on COPII vesicles; STING1-containing ERGIC serves as a membrane source for LC3 lipidation, which is a key step in autophagosome biogenesis (By similarity). Localizes in the lysosome membrane in a TMEM203-dependent manner (PubMed:31346090).</text>
</comment>
<comment type="alternative products">
    <event type="alternative splicing"/>
    <isoform>
        <id>Q3TBT3-1</id>
        <name>1</name>
        <sequence type="displayed"/>
    </isoform>
    <isoform>
        <id>Q3TBT3-2</id>
        <name>2</name>
        <sequence type="described" ref="VSP_022284"/>
    </isoform>
    <isoform>
        <id>Q3TBT3-3</id>
        <name>3</name>
        <sequence type="described" ref="VSP_022285"/>
    </isoform>
</comment>
<comment type="tissue specificity">
    <text evidence="4">Present in spleen and thymus tissue. Also present in dendritic cells (at protein level).</text>
</comment>
<comment type="developmental stage">
    <text evidence="4">Expressed throughout the B-cell lineage prior to the plasma cell stage but occurs at highest levels in mature B-cells. Highly expressed in cells representing mature stages of B-cells but weakly expressed in pre-B cells, immature B-cells, and memory B-cell stages. Not detected in plasma cells.</text>
</comment>
<comment type="domain">
    <text evidence="1 2">In absence of cGAMP, the transmembrane and cytoplasmic regions interact to form an integrated, domain-swapped dimeric assembly (By similarity). In absence of cyclic nucleotide (c-di-GMP or cGAMP), the protein is autoinhibited by an intramolecular interaction between the cyclic dinucleotide-binding domain (CBD) and the C-terminal tail (CTT) (By similarity). Following cGAMP-binding, the cyclic dinucleotide-binding domain (CBD) is closed, leading to a 180 degrees rotation of the CBD domain relative to the transmembrane domain. This rotation is coupled to a conformational change in a loop on the side of the CBD dimer, which leads to the formation of the STING1 tetramer and higher-order oligomers through side-by-side packing (By similarity). The N-terminal part of the CBD region was initially though to contain a fifth transmembrane region (TM5) but is part of the folded, soluble CBD (By similarity).</text>
</comment>
<comment type="domain">
    <text evidence="2">The pLxIS motif constitutes an IRF3-binding motif: following phosphorylation by TBK1, the phosphorylated pLxIS motif of STING1 recruits IRF3. IRF3 is then phosphorylated and activated by TBK1 to induce type-I interferons and other cytokines.</text>
</comment>
<comment type="domain">
    <text evidence="2">The N-terminal domain interacts with glycerophospholipids and phospholipids.</text>
</comment>
<comment type="PTM">
    <text evidence="2 4 13 18 27">Phosphorylation by TBK1 leads to activation and production of IFN-beta (By similarity). Following cyclic nucleotide (c-di-GMP or cGAMP)-binding, activation and translocation from the endoplasmic reticulum, STING1 is phosphorylated by TBK1 at Ser-365 in the pLxIS motif (By similarity). The phosphorylated pLxIS motif constitutes an IRF3-binding motif, leading to recruitment of the transcription factor IRF3 to induce type-I interferons and other cytokines (PubMed:27637147). The phosphorylated pLxIS motif facilitates SENP2 recruitment during late phase of viral infection (PubMed:27637147). Phosphorylated on tyrosine residues upon MHC-II aggregation (PubMed:18559423). Dephosphorylation by PPP6C leads to inactivation and decreased production of IFN-beta (By similarity). Phosphorylation at Ser-357 is also required to activate IRF3 (PubMed:25636800). Phosphorylation at Ser-354 by MAP3K7/TAK1 facilitates its interaction with STEEP1, promoting STING1 translocation to COPII vesicles (PubMed:37832545).</text>
</comment>
<comment type="PTM">
    <text evidence="2 22">Ubiquitinated (PubMed:29496741). Ubiquitinated via 'Lys-63'-linked ubiquitin chains in response to double-stranded DNA treatment, leading to relocalization to autophagosomes and subsequent degradation; this process is dependent on SQSTM1 (PubMed:29496741). 'Lys-63'-linked ubiquitination mediated by TRIM56 at Lys-150 promotes homodimerization and recruitment of the antiviral kinase TBK1 and subsequent production of IFN-beta (By similarity). 'Lys-48'-linked polyubiquitination at Lys-150 occurring after viral infection is mediated by RNF5 and leads to proteasomal degradation (By similarity). 'Lys-11'-linked polyubiquitination at Lys-150 by RNF26 leads to stabilize STING1: it protects STING1 from RNF5-mediated 'Lys-48'-linked polyubiquitination (By similarity). 'Lys-33'-linked and 'Lys-48'-linked deubiquitinated by USP20; leading to its stabilization and promotion of innate antiviral response (By similarity). 'Lys-48'-linked deubiquitinated by USP44; leading to its stabilization and promotion of innate antiviral response (By similarity). Deubiquitinated by USP13; leading to inhibition of innate antiviral response (By similarity). 'Lys-63'-linked deubiquitinated by USP49; leading to inhibition of the subsequent recruitment of TBK1 to the signaling complex (By similarity). 'Lys-63'-linked ubiquitination mediated by RNF39 promotes the activation of the cGAS-STING pathway (By similarity). MARCHF5-mediated ubiquitination prevents the oxidation-induced polymer formation (PubMed:37916870).</text>
</comment>
<comment type="PTM">
    <text evidence="18">Sumoylated at Lys-337 by TRIM38 during the early phase of viral infection, promoting its stability by preventing its relocalization to autophagosomes and subsequent degradation (PubMed:27637147). Desumoylated by SENP2 during the late phase of viral infection (PubMed:27637147).</text>
</comment>
<comment type="PTM">
    <text evidence="23">Palmitoylation takes place in the Golgi apparatus and creates a platform for the recruitment of TBK1.</text>
</comment>
<comment type="disruption phenotype">
    <text evidence="7">Defects in innate immunity. Death within 7 days of herpes simplex virus 1 (HSV-1) infection. In addition, mice show a remarkable reduction in cytotoxic T-cell responses after plasmid DNA vaccination. Cells fail to induce type I interferon production in response to dsDNA and infection with herpes simplex virus 1 (HSV-1) and L.monocytogenes that deliver DNA to the host cytosol.</text>
</comment>
<comment type="miscellaneous">
    <text evidence="30">Was named MPYS because the protein sequence begins by Met-Pro-Tyr-Ser residues.</text>
</comment>
<comment type="similarity">
    <text evidence="37">Belongs to the STING family.</text>
</comment>
<comment type="sequence caution" evidence="37">
    <conflict type="erroneous initiation">
        <sequence resource="EMBL-CDS" id="AAH27757"/>
    </conflict>
    <text>Extended N-terminus.</text>
</comment>
<comment type="sequence caution" evidence="37">
    <conflict type="erroneous termination">
        <sequence resource="EMBL-CDS" id="BAC37010"/>
    </conflict>
    <text>Truncated C-terminus.</text>
</comment>
<comment type="sequence caution" evidence="37">
    <conflict type="frameshift">
        <sequence resource="EMBL-CDS" id="BAE42563"/>
    </conflict>
</comment>
<sequence>MPYSNLHPAIPRPRGHRSKYVALIFLVASLMILWVAKDPPNHTLKYLALHLASHELGLLLKNLCCLAEELCHVQSRYQGSYWKAVRACLGCPIHCMAMILLSSYFYFLQNTADIYLSWMFGLLVLYKSLSMLLGLQSLTPAEVSAVCEEKKLNVAHGLAWSYYIGYLRLILPGLQARIRMFNQLHNNMLSGAGSRRLYILFPLDCGVPDNLSVVDPNIRFRDMLPQQNIDRAGIKNRVYSNSVYEILENGQPAGVCILEYATPLQTLFAMSQDAKAGFSREDRLEQAKLFCRTLEEILEDVPESRNNCRLIVYQEPTDGNSFSLSQEVLRHIRQEEKEEVTMNAPMTSVAPPPSVLSQEPRLLISGMDQPLPLRTDLI</sequence>